<evidence type="ECO:0000255" key="1">
    <source>
        <dbReference type="HAMAP-Rule" id="MF_01401"/>
    </source>
</evidence>
<gene>
    <name evidence="1" type="primary">msrA</name>
    <name type="ordered locus">STY4767</name>
    <name type="ordered locus">t4462</name>
</gene>
<sequence>MSLFDKKHLVTQADALPGRNTPMPIATLHAVNEHSMTNVPAGMEIAYFAMGCFWGVERLFWQLPGVYSTAAGYAGGYTPNPTYREVCSGQTGHAEAVRIVYDPAVIRYEQLLQTFWENHDPTQGMQQGNDHGTQYRSAIYPLTPEQNAAAHASRERFQSAMAAAGDHRPITTEIAHATPFYYAEDEHQQYLHKNPYGYCGIGGIGVCLPPDA</sequence>
<dbReference type="EC" id="1.8.4.11" evidence="1"/>
<dbReference type="EMBL" id="AL513382">
    <property type="protein sequence ID" value="CAD06888.1"/>
    <property type="molecule type" value="Genomic_DNA"/>
</dbReference>
<dbReference type="EMBL" id="AE014613">
    <property type="protein sequence ID" value="AAO71909.1"/>
    <property type="molecule type" value="Genomic_DNA"/>
</dbReference>
<dbReference type="RefSeq" id="NP_458845.1">
    <property type="nucleotide sequence ID" value="NC_003198.1"/>
</dbReference>
<dbReference type="RefSeq" id="WP_000051467.1">
    <property type="nucleotide sequence ID" value="NZ_WSUR01000016.1"/>
</dbReference>
<dbReference type="SMR" id="Q8Z150"/>
<dbReference type="STRING" id="220341.gene:17588588"/>
<dbReference type="KEGG" id="stt:t4462"/>
<dbReference type="KEGG" id="sty:STY4767"/>
<dbReference type="PATRIC" id="fig|220341.7.peg.4870"/>
<dbReference type="eggNOG" id="COG0225">
    <property type="taxonomic scope" value="Bacteria"/>
</dbReference>
<dbReference type="HOGENOM" id="CLU_031040_10_3_6"/>
<dbReference type="OMA" id="LFWESHD"/>
<dbReference type="OrthoDB" id="4174719at2"/>
<dbReference type="Proteomes" id="UP000000541">
    <property type="component" value="Chromosome"/>
</dbReference>
<dbReference type="Proteomes" id="UP000002670">
    <property type="component" value="Chromosome"/>
</dbReference>
<dbReference type="GO" id="GO:0005737">
    <property type="term" value="C:cytoplasm"/>
    <property type="evidence" value="ECO:0007669"/>
    <property type="project" value="TreeGrafter"/>
</dbReference>
<dbReference type="GO" id="GO:0036456">
    <property type="term" value="F:L-methionine-(S)-S-oxide reductase activity"/>
    <property type="evidence" value="ECO:0007669"/>
    <property type="project" value="TreeGrafter"/>
</dbReference>
<dbReference type="GO" id="GO:0008113">
    <property type="term" value="F:peptide-methionine (S)-S-oxide reductase activity"/>
    <property type="evidence" value="ECO:0007669"/>
    <property type="project" value="UniProtKB-UniRule"/>
</dbReference>
<dbReference type="GO" id="GO:0034599">
    <property type="term" value="P:cellular response to oxidative stress"/>
    <property type="evidence" value="ECO:0007669"/>
    <property type="project" value="TreeGrafter"/>
</dbReference>
<dbReference type="GO" id="GO:0036211">
    <property type="term" value="P:protein modification process"/>
    <property type="evidence" value="ECO:0007669"/>
    <property type="project" value="UniProtKB-UniRule"/>
</dbReference>
<dbReference type="FunFam" id="3.30.1060.10:FF:000001">
    <property type="entry name" value="Peptide methionine sulfoxide reductase MsrA"/>
    <property type="match status" value="1"/>
</dbReference>
<dbReference type="Gene3D" id="3.30.1060.10">
    <property type="entry name" value="Peptide methionine sulphoxide reductase MsrA"/>
    <property type="match status" value="1"/>
</dbReference>
<dbReference type="HAMAP" id="MF_01401">
    <property type="entry name" value="MsrA"/>
    <property type="match status" value="1"/>
</dbReference>
<dbReference type="InterPro" id="IPR002569">
    <property type="entry name" value="Met_Sox_Rdtase_MsrA_dom"/>
</dbReference>
<dbReference type="InterPro" id="IPR036509">
    <property type="entry name" value="Met_Sox_Rdtase_MsrA_sf"/>
</dbReference>
<dbReference type="InterPro" id="IPR050162">
    <property type="entry name" value="MsrA_MetSO_reductase"/>
</dbReference>
<dbReference type="NCBIfam" id="TIGR00401">
    <property type="entry name" value="msrA"/>
    <property type="match status" value="1"/>
</dbReference>
<dbReference type="PANTHER" id="PTHR42799">
    <property type="entry name" value="MITOCHONDRIAL PEPTIDE METHIONINE SULFOXIDE REDUCTASE"/>
    <property type="match status" value="1"/>
</dbReference>
<dbReference type="PANTHER" id="PTHR42799:SF2">
    <property type="entry name" value="MITOCHONDRIAL PEPTIDE METHIONINE SULFOXIDE REDUCTASE"/>
    <property type="match status" value="1"/>
</dbReference>
<dbReference type="Pfam" id="PF01625">
    <property type="entry name" value="PMSR"/>
    <property type="match status" value="1"/>
</dbReference>
<dbReference type="SUPFAM" id="SSF55068">
    <property type="entry name" value="Peptide methionine sulfoxide reductase"/>
    <property type="match status" value="1"/>
</dbReference>
<reference key="1">
    <citation type="journal article" date="2001" name="Nature">
        <title>Complete genome sequence of a multiple drug resistant Salmonella enterica serovar Typhi CT18.</title>
        <authorList>
            <person name="Parkhill J."/>
            <person name="Dougan G."/>
            <person name="James K.D."/>
            <person name="Thomson N.R."/>
            <person name="Pickard D."/>
            <person name="Wain J."/>
            <person name="Churcher C.M."/>
            <person name="Mungall K.L."/>
            <person name="Bentley S.D."/>
            <person name="Holden M.T.G."/>
            <person name="Sebaihia M."/>
            <person name="Baker S."/>
            <person name="Basham D."/>
            <person name="Brooks K."/>
            <person name="Chillingworth T."/>
            <person name="Connerton P."/>
            <person name="Cronin A."/>
            <person name="Davis P."/>
            <person name="Davies R.M."/>
            <person name="Dowd L."/>
            <person name="White N."/>
            <person name="Farrar J."/>
            <person name="Feltwell T."/>
            <person name="Hamlin N."/>
            <person name="Haque A."/>
            <person name="Hien T.T."/>
            <person name="Holroyd S."/>
            <person name="Jagels K."/>
            <person name="Krogh A."/>
            <person name="Larsen T.S."/>
            <person name="Leather S."/>
            <person name="Moule S."/>
            <person name="O'Gaora P."/>
            <person name="Parry C."/>
            <person name="Quail M.A."/>
            <person name="Rutherford K.M."/>
            <person name="Simmonds M."/>
            <person name="Skelton J."/>
            <person name="Stevens K."/>
            <person name="Whitehead S."/>
            <person name="Barrell B.G."/>
        </authorList>
    </citation>
    <scope>NUCLEOTIDE SEQUENCE [LARGE SCALE GENOMIC DNA]</scope>
    <source>
        <strain>CT18</strain>
    </source>
</reference>
<reference key="2">
    <citation type="journal article" date="2003" name="J. Bacteriol.">
        <title>Comparative genomics of Salmonella enterica serovar Typhi strains Ty2 and CT18.</title>
        <authorList>
            <person name="Deng W."/>
            <person name="Liou S.-R."/>
            <person name="Plunkett G. III"/>
            <person name="Mayhew G.F."/>
            <person name="Rose D.J."/>
            <person name="Burland V."/>
            <person name="Kodoyianni V."/>
            <person name="Schwartz D.C."/>
            <person name="Blattner F.R."/>
        </authorList>
    </citation>
    <scope>NUCLEOTIDE SEQUENCE [LARGE SCALE GENOMIC DNA]</scope>
    <source>
        <strain>ATCC 700931 / Ty2</strain>
    </source>
</reference>
<name>MSRA_SALTI</name>
<proteinExistence type="inferred from homology"/>
<protein>
    <recommendedName>
        <fullName evidence="1">Peptide methionine sulfoxide reductase MsrA</fullName>
        <shortName evidence="1">Protein-methionine-S-oxide reductase</shortName>
        <ecNumber evidence="1">1.8.4.11</ecNumber>
    </recommendedName>
    <alternativeName>
        <fullName evidence="1">Peptide-methionine (S)-S-oxide reductase</fullName>
        <shortName evidence="1">Peptide Met(O) reductase</shortName>
    </alternativeName>
</protein>
<comment type="function">
    <text evidence="1">Has an important function as a repair enzyme for proteins that have been inactivated by oxidation. Catalyzes the reversible oxidation-reduction of methionine sulfoxide in proteins to methionine.</text>
</comment>
<comment type="catalytic activity">
    <reaction evidence="1">
        <text>L-methionyl-[protein] + [thioredoxin]-disulfide + H2O = L-methionyl-(S)-S-oxide-[protein] + [thioredoxin]-dithiol</text>
        <dbReference type="Rhea" id="RHEA:14217"/>
        <dbReference type="Rhea" id="RHEA-COMP:10698"/>
        <dbReference type="Rhea" id="RHEA-COMP:10700"/>
        <dbReference type="Rhea" id="RHEA-COMP:12313"/>
        <dbReference type="Rhea" id="RHEA-COMP:12315"/>
        <dbReference type="ChEBI" id="CHEBI:15377"/>
        <dbReference type="ChEBI" id="CHEBI:16044"/>
        <dbReference type="ChEBI" id="CHEBI:29950"/>
        <dbReference type="ChEBI" id="CHEBI:44120"/>
        <dbReference type="ChEBI" id="CHEBI:50058"/>
        <dbReference type="EC" id="1.8.4.11"/>
    </reaction>
</comment>
<comment type="catalytic activity">
    <reaction evidence="1">
        <text>[thioredoxin]-disulfide + L-methionine + H2O = L-methionine (S)-S-oxide + [thioredoxin]-dithiol</text>
        <dbReference type="Rhea" id="RHEA:19993"/>
        <dbReference type="Rhea" id="RHEA-COMP:10698"/>
        <dbReference type="Rhea" id="RHEA-COMP:10700"/>
        <dbReference type="ChEBI" id="CHEBI:15377"/>
        <dbReference type="ChEBI" id="CHEBI:29950"/>
        <dbReference type="ChEBI" id="CHEBI:50058"/>
        <dbReference type="ChEBI" id="CHEBI:57844"/>
        <dbReference type="ChEBI" id="CHEBI:58772"/>
        <dbReference type="EC" id="1.8.4.11"/>
    </reaction>
</comment>
<comment type="similarity">
    <text evidence="1">Belongs to the MsrA Met sulfoxide reductase family.</text>
</comment>
<feature type="chain" id="PRO_0000138577" description="Peptide methionine sulfoxide reductase MsrA">
    <location>
        <begin position="1"/>
        <end position="212"/>
    </location>
</feature>
<feature type="active site" evidence="1">
    <location>
        <position position="52"/>
    </location>
</feature>
<keyword id="KW-0560">Oxidoreductase</keyword>
<accession>Q8Z150</accession>
<organism>
    <name type="scientific">Salmonella typhi</name>
    <dbReference type="NCBI Taxonomy" id="90370"/>
    <lineage>
        <taxon>Bacteria</taxon>
        <taxon>Pseudomonadati</taxon>
        <taxon>Pseudomonadota</taxon>
        <taxon>Gammaproteobacteria</taxon>
        <taxon>Enterobacterales</taxon>
        <taxon>Enterobacteriaceae</taxon>
        <taxon>Salmonella</taxon>
    </lineage>
</organism>